<dbReference type="EMBL" id="M68963">
    <property type="protein sequence ID" value="AAA65564.1"/>
    <property type="molecule type" value="Genomic_DNA"/>
</dbReference>
<dbReference type="EMBL" id="X83413">
    <property type="protein sequence ID" value="CAA58388.1"/>
    <property type="molecule type" value="Genomic_DNA"/>
</dbReference>
<dbReference type="PIR" id="B33560">
    <property type="entry name" value="B33560"/>
</dbReference>
<dbReference type="RefSeq" id="NP_042947.1">
    <property type="nucleotide sequence ID" value="NC_001664.2"/>
</dbReference>
<dbReference type="SMR" id="P24434"/>
<dbReference type="GlyCosmos" id="P24434">
    <property type="glycosylation" value="7 sites, No reported glycans"/>
</dbReference>
<dbReference type="DNASU" id="1487936"/>
<dbReference type="GeneID" id="1487936"/>
<dbReference type="KEGG" id="vg:1487936"/>
<dbReference type="Proteomes" id="UP000009295">
    <property type="component" value="Segment"/>
</dbReference>
<dbReference type="InterPro" id="IPR008649">
    <property type="entry name" value="Herpes_UL82/UL83"/>
</dbReference>
<dbReference type="Pfam" id="PF05784">
    <property type="entry name" value="Herpes_UL82_83"/>
    <property type="match status" value="1"/>
</dbReference>
<feature type="chain" id="PRO_0000116288" description="Protein U54">
    <location>
        <begin position="1"/>
        <end position="458"/>
    </location>
</feature>
<feature type="glycosylation site" description="N-linked (GlcNAc...) asparagine; by host" evidence="1">
    <location>
        <position position="76"/>
    </location>
</feature>
<feature type="glycosylation site" description="N-linked (GlcNAc...) asparagine; by host" evidence="1">
    <location>
        <position position="102"/>
    </location>
</feature>
<feature type="glycosylation site" description="N-linked (GlcNAc...) asparagine; by host" evidence="1">
    <location>
        <position position="281"/>
    </location>
</feature>
<feature type="glycosylation site" description="N-linked (GlcNAc...) asparagine; by host" evidence="1">
    <location>
        <position position="321"/>
    </location>
</feature>
<feature type="glycosylation site" description="N-linked (GlcNAc...) asparagine; by host" evidence="1">
    <location>
        <position position="346"/>
    </location>
</feature>
<feature type="glycosylation site" description="N-linked (GlcNAc...) asparagine; by host" evidence="1">
    <location>
        <position position="434"/>
    </location>
</feature>
<feature type="glycosylation site" description="N-linked (GlcNAc...) asparagine; by host" evidence="1">
    <location>
        <position position="451"/>
    </location>
</feature>
<organismHost>
    <name type="scientific">Homo sapiens</name>
    <name type="common">Human</name>
    <dbReference type="NCBI Taxonomy" id="9606"/>
</organismHost>
<proteinExistence type="inferred from homology"/>
<sequence length="458" mass="51498">MQPATLQWSSYVLQLRVTTTAILKPGELRLFKCGLGITPPSSAVVCICRDESSFTSSPFTYIDPKDYGNIPFAVQNISDLDLDLSRLPIVLNIFALPHANVNISNLPVQRIEAHDRHIIPHGQCDAKFVIYGPLTRIKIQVADIRWIEQTPEEPTRYSFKAEIWVNLQNTPLDQIFKTGNIEFISHKNVYISRILLCGNLLILKANYENDYLLDDNFYPEQLAIQISLTPQTADITLSQNQETLLKCNTHSITVCATKNIIPNTVTPVHCSFNTIFNSNSNFTGLFIPKLLLGISTTTGIWDETRPLYITMKAFKKNRRINYSQPIGVVYFFPKQILPPGNNVEFNWTEASKIYVNTESPNGPVRNTVTFTNQAVLRTPSLSTVANLTPDINMGIFLSSLRVAFDTAHMVPLHFSLKPGESTRMEFMPPGTPQNLTILEGDVGIHFIPCHNHSHRSSP</sequence>
<reference key="1">
    <citation type="journal article" date="1990" name="J. Virol.">
        <title>Human herpesvirus 6 is closely related to human cytomegalovirus.</title>
        <authorList>
            <person name="Lawrence G.L."/>
            <person name="Chee M."/>
            <person name="Craxton M.A."/>
            <person name="Gompels U.A."/>
            <person name="Honess R.W."/>
            <person name="Barrell B.G."/>
        </authorList>
    </citation>
    <scope>NUCLEOTIDE SEQUENCE [GENOMIC DNA]</scope>
</reference>
<reference key="2">
    <citation type="journal article" date="1995" name="Virology">
        <title>The DNA sequence of human herpesvirus-6: structure, coding content, and genome evolution.</title>
        <authorList>
            <person name="Gompels U.A."/>
            <person name="Nicholas J."/>
            <person name="Lawrence G.L."/>
            <person name="Jones M."/>
            <person name="Thomson B.J."/>
            <person name="Martin M.E.D."/>
            <person name="Efstathiou S."/>
            <person name="Craxton M.A."/>
            <person name="Macaulay H.A."/>
        </authorList>
    </citation>
    <scope>NUCLEOTIDE SEQUENCE [LARGE SCALE GENOMIC DNA]</scope>
</reference>
<keyword id="KW-0325">Glycoprotein</keyword>
<keyword id="KW-1185">Reference proteome</keyword>
<organism>
    <name type="scientific">Human herpesvirus 6A (strain Uganda-1102)</name>
    <name type="common">HHV-6 variant A</name>
    <name type="synonym">Human B lymphotropic virus</name>
    <dbReference type="NCBI Taxonomy" id="10370"/>
    <lineage>
        <taxon>Viruses</taxon>
        <taxon>Duplodnaviria</taxon>
        <taxon>Heunggongvirae</taxon>
        <taxon>Peploviricota</taxon>
        <taxon>Herviviricetes</taxon>
        <taxon>Herpesvirales</taxon>
        <taxon>Orthoherpesviridae</taxon>
        <taxon>Betaherpesvirinae</taxon>
        <taxon>Roseolovirus</taxon>
        <taxon>Roseolovirus humanbeta6a</taxon>
        <taxon>Human betaherpesvirus 6A</taxon>
    </lineage>
</organism>
<accession>P24434</accession>
<name>VU54_HHV6U</name>
<evidence type="ECO:0000255" key="1"/>
<evidence type="ECO:0000305" key="2"/>
<comment type="similarity">
    <text evidence="2">Belongs to the herpesviridae UL82 family.</text>
</comment>
<protein>
    <recommendedName>
        <fullName>Protein U54</fullName>
    </recommendedName>
</protein>
<gene>
    <name type="primary">U54</name>
    <name type="synonym">1L</name>
</gene>